<accession>Q2NV91</accession>
<evidence type="ECO:0000255" key="1">
    <source>
        <dbReference type="HAMAP-Rule" id="MF_00021"/>
    </source>
</evidence>
<organism>
    <name type="scientific">Sodalis glossinidius (strain morsitans)</name>
    <dbReference type="NCBI Taxonomy" id="343509"/>
    <lineage>
        <taxon>Bacteria</taxon>
        <taxon>Pseudomonadati</taxon>
        <taxon>Pseudomonadota</taxon>
        <taxon>Gammaproteobacteria</taxon>
        <taxon>Enterobacterales</taxon>
        <taxon>Bruguierivoracaceae</taxon>
        <taxon>Sodalis</taxon>
    </lineage>
</organism>
<name>THII_SODGM</name>
<dbReference type="EC" id="2.8.1.4" evidence="1"/>
<dbReference type="EMBL" id="AP008232">
    <property type="protein sequence ID" value="BAE73934.1"/>
    <property type="molecule type" value="Genomic_DNA"/>
</dbReference>
<dbReference type="RefSeq" id="WP_011410522.1">
    <property type="nucleotide sequence ID" value="NC_007712.1"/>
</dbReference>
<dbReference type="SMR" id="Q2NV91"/>
<dbReference type="STRING" id="343509.SG0659"/>
<dbReference type="KEGG" id="sgl:SG0659"/>
<dbReference type="eggNOG" id="COG0301">
    <property type="taxonomic scope" value="Bacteria"/>
</dbReference>
<dbReference type="eggNOG" id="COG0607">
    <property type="taxonomic scope" value="Bacteria"/>
</dbReference>
<dbReference type="HOGENOM" id="CLU_037952_4_1_6"/>
<dbReference type="OrthoDB" id="9773948at2"/>
<dbReference type="BioCyc" id="SGLO343509:SGP1_RS05695-MONOMER"/>
<dbReference type="UniPathway" id="UPA00060"/>
<dbReference type="Proteomes" id="UP000001932">
    <property type="component" value="Chromosome"/>
</dbReference>
<dbReference type="GO" id="GO:0005829">
    <property type="term" value="C:cytosol"/>
    <property type="evidence" value="ECO:0007669"/>
    <property type="project" value="TreeGrafter"/>
</dbReference>
<dbReference type="GO" id="GO:0005524">
    <property type="term" value="F:ATP binding"/>
    <property type="evidence" value="ECO:0007669"/>
    <property type="project" value="UniProtKB-UniRule"/>
</dbReference>
<dbReference type="GO" id="GO:0004810">
    <property type="term" value="F:CCA tRNA nucleotidyltransferase activity"/>
    <property type="evidence" value="ECO:0007669"/>
    <property type="project" value="InterPro"/>
</dbReference>
<dbReference type="GO" id="GO:0000049">
    <property type="term" value="F:tRNA binding"/>
    <property type="evidence" value="ECO:0007669"/>
    <property type="project" value="UniProtKB-UniRule"/>
</dbReference>
<dbReference type="GO" id="GO:0140741">
    <property type="term" value="F:tRNA-uracil-4 sulfurtransferase activity"/>
    <property type="evidence" value="ECO:0007669"/>
    <property type="project" value="UniProtKB-EC"/>
</dbReference>
<dbReference type="GO" id="GO:0009228">
    <property type="term" value="P:thiamine biosynthetic process"/>
    <property type="evidence" value="ECO:0007669"/>
    <property type="project" value="UniProtKB-KW"/>
</dbReference>
<dbReference type="GO" id="GO:0009229">
    <property type="term" value="P:thiamine diphosphate biosynthetic process"/>
    <property type="evidence" value="ECO:0007669"/>
    <property type="project" value="UniProtKB-UniRule"/>
</dbReference>
<dbReference type="GO" id="GO:0052837">
    <property type="term" value="P:thiazole biosynthetic process"/>
    <property type="evidence" value="ECO:0007669"/>
    <property type="project" value="InterPro"/>
</dbReference>
<dbReference type="GO" id="GO:0002937">
    <property type="term" value="P:tRNA 4-thiouridine biosynthesis"/>
    <property type="evidence" value="ECO:0007669"/>
    <property type="project" value="TreeGrafter"/>
</dbReference>
<dbReference type="CDD" id="cd01712">
    <property type="entry name" value="PPase_ThiI"/>
    <property type="match status" value="1"/>
</dbReference>
<dbReference type="CDD" id="cd00158">
    <property type="entry name" value="RHOD"/>
    <property type="match status" value="1"/>
</dbReference>
<dbReference type="CDD" id="cd11716">
    <property type="entry name" value="THUMP_ThiI"/>
    <property type="match status" value="1"/>
</dbReference>
<dbReference type="FunFam" id="3.30.2130.30:FF:000002">
    <property type="entry name" value="tRNA sulfurtransferase"/>
    <property type="match status" value="1"/>
</dbReference>
<dbReference type="FunFam" id="3.40.50.620:FF:000029">
    <property type="entry name" value="tRNA sulfurtransferase"/>
    <property type="match status" value="1"/>
</dbReference>
<dbReference type="Gene3D" id="3.30.2130.30">
    <property type="match status" value="1"/>
</dbReference>
<dbReference type="Gene3D" id="3.40.50.620">
    <property type="entry name" value="HUPs"/>
    <property type="match status" value="1"/>
</dbReference>
<dbReference type="Gene3D" id="3.40.250.10">
    <property type="entry name" value="Rhodanese-like domain"/>
    <property type="match status" value="1"/>
</dbReference>
<dbReference type="HAMAP" id="MF_00021">
    <property type="entry name" value="ThiI"/>
    <property type="match status" value="1"/>
</dbReference>
<dbReference type="InterPro" id="IPR001763">
    <property type="entry name" value="Rhodanese-like_dom"/>
</dbReference>
<dbReference type="InterPro" id="IPR036873">
    <property type="entry name" value="Rhodanese-like_dom_sf"/>
</dbReference>
<dbReference type="InterPro" id="IPR014729">
    <property type="entry name" value="Rossmann-like_a/b/a_fold"/>
</dbReference>
<dbReference type="InterPro" id="IPR020536">
    <property type="entry name" value="ThiI_AANH"/>
</dbReference>
<dbReference type="InterPro" id="IPR054173">
    <property type="entry name" value="ThiI_fer"/>
</dbReference>
<dbReference type="InterPro" id="IPR049961">
    <property type="entry name" value="ThiI_N"/>
</dbReference>
<dbReference type="InterPro" id="IPR026340">
    <property type="entry name" value="THII_Thiazole_biosynth_dom"/>
</dbReference>
<dbReference type="InterPro" id="IPR004114">
    <property type="entry name" value="THUMP_dom"/>
</dbReference>
<dbReference type="InterPro" id="IPR049962">
    <property type="entry name" value="THUMP_ThiI"/>
</dbReference>
<dbReference type="InterPro" id="IPR003720">
    <property type="entry name" value="tRNA_STrfase"/>
</dbReference>
<dbReference type="InterPro" id="IPR050102">
    <property type="entry name" value="tRNA_sulfurtransferase_ThiI"/>
</dbReference>
<dbReference type="NCBIfam" id="TIGR04271">
    <property type="entry name" value="ThiI_C_thiazole"/>
    <property type="match status" value="1"/>
</dbReference>
<dbReference type="NCBIfam" id="TIGR00342">
    <property type="entry name" value="tRNA uracil 4-sulfurtransferase ThiI"/>
    <property type="match status" value="1"/>
</dbReference>
<dbReference type="PANTHER" id="PTHR43209">
    <property type="entry name" value="TRNA SULFURTRANSFERASE"/>
    <property type="match status" value="1"/>
</dbReference>
<dbReference type="PANTHER" id="PTHR43209:SF1">
    <property type="entry name" value="TRNA SULFURTRANSFERASE"/>
    <property type="match status" value="1"/>
</dbReference>
<dbReference type="Pfam" id="PF00581">
    <property type="entry name" value="Rhodanese"/>
    <property type="match status" value="1"/>
</dbReference>
<dbReference type="Pfam" id="PF02568">
    <property type="entry name" value="ThiI"/>
    <property type="match status" value="1"/>
</dbReference>
<dbReference type="Pfam" id="PF22025">
    <property type="entry name" value="ThiI_fer"/>
    <property type="match status" value="1"/>
</dbReference>
<dbReference type="Pfam" id="PF02926">
    <property type="entry name" value="THUMP"/>
    <property type="match status" value="1"/>
</dbReference>
<dbReference type="SMART" id="SM00981">
    <property type="entry name" value="THUMP"/>
    <property type="match status" value="1"/>
</dbReference>
<dbReference type="SUPFAM" id="SSF52402">
    <property type="entry name" value="Adenine nucleotide alpha hydrolases-like"/>
    <property type="match status" value="1"/>
</dbReference>
<dbReference type="SUPFAM" id="SSF52821">
    <property type="entry name" value="Rhodanese/Cell cycle control phosphatase"/>
    <property type="match status" value="1"/>
</dbReference>
<dbReference type="SUPFAM" id="SSF143437">
    <property type="entry name" value="THUMP domain-like"/>
    <property type="match status" value="1"/>
</dbReference>
<dbReference type="PROSITE" id="PS50206">
    <property type="entry name" value="RHODANESE_3"/>
    <property type="match status" value="1"/>
</dbReference>
<dbReference type="PROSITE" id="PS51165">
    <property type="entry name" value="THUMP"/>
    <property type="match status" value="1"/>
</dbReference>
<protein>
    <recommendedName>
        <fullName evidence="1">tRNA sulfurtransferase</fullName>
        <ecNumber evidence="1">2.8.1.4</ecNumber>
    </recommendedName>
    <alternativeName>
        <fullName evidence="1">Sulfur carrier protein ThiS sulfurtransferase</fullName>
    </alternativeName>
    <alternativeName>
        <fullName evidence="1">Thiamine biosynthesis protein ThiI</fullName>
    </alternativeName>
    <alternativeName>
        <fullName evidence="1">tRNA 4-thiouridine synthase</fullName>
    </alternativeName>
</protein>
<reference key="1">
    <citation type="journal article" date="2006" name="Genome Res.">
        <title>Massive genome erosion and functional adaptations provide insights into the symbiotic lifestyle of Sodalis glossinidius in the tsetse host.</title>
        <authorList>
            <person name="Toh H."/>
            <person name="Weiss B.L."/>
            <person name="Perkin S.A.H."/>
            <person name="Yamashita A."/>
            <person name="Oshima K."/>
            <person name="Hattori M."/>
            <person name="Aksoy S."/>
        </authorList>
    </citation>
    <scope>NUCLEOTIDE SEQUENCE [LARGE SCALE GENOMIC DNA]</scope>
    <source>
        <strain>morsitans</strain>
    </source>
</reference>
<comment type="function">
    <text evidence="1">Catalyzes the ATP-dependent transfer of a sulfur to tRNA to produce 4-thiouridine in position 8 of tRNAs, which functions as a near-UV photosensor. Also catalyzes the transfer of sulfur to the sulfur carrier protein ThiS, forming ThiS-thiocarboxylate. This is a step in the synthesis of thiazole, in the thiamine biosynthesis pathway. The sulfur is donated as persulfide by IscS.</text>
</comment>
<comment type="catalytic activity">
    <reaction evidence="1">
        <text>[ThiI sulfur-carrier protein]-S-sulfanyl-L-cysteine + a uridine in tRNA + 2 reduced [2Fe-2S]-[ferredoxin] + ATP + H(+) = [ThiI sulfur-carrier protein]-L-cysteine + a 4-thiouridine in tRNA + 2 oxidized [2Fe-2S]-[ferredoxin] + AMP + diphosphate</text>
        <dbReference type="Rhea" id="RHEA:24176"/>
        <dbReference type="Rhea" id="RHEA-COMP:10000"/>
        <dbReference type="Rhea" id="RHEA-COMP:10001"/>
        <dbReference type="Rhea" id="RHEA-COMP:13337"/>
        <dbReference type="Rhea" id="RHEA-COMP:13338"/>
        <dbReference type="Rhea" id="RHEA-COMP:13339"/>
        <dbReference type="Rhea" id="RHEA-COMP:13340"/>
        <dbReference type="ChEBI" id="CHEBI:15378"/>
        <dbReference type="ChEBI" id="CHEBI:29950"/>
        <dbReference type="ChEBI" id="CHEBI:30616"/>
        <dbReference type="ChEBI" id="CHEBI:33019"/>
        <dbReference type="ChEBI" id="CHEBI:33737"/>
        <dbReference type="ChEBI" id="CHEBI:33738"/>
        <dbReference type="ChEBI" id="CHEBI:61963"/>
        <dbReference type="ChEBI" id="CHEBI:65315"/>
        <dbReference type="ChEBI" id="CHEBI:136798"/>
        <dbReference type="ChEBI" id="CHEBI:456215"/>
        <dbReference type="EC" id="2.8.1.4"/>
    </reaction>
</comment>
<comment type="catalytic activity">
    <reaction evidence="1">
        <text>[ThiS sulfur-carrier protein]-C-terminal Gly-Gly-AMP + S-sulfanyl-L-cysteinyl-[cysteine desulfurase] + AH2 = [ThiS sulfur-carrier protein]-C-terminal-Gly-aminoethanethioate + L-cysteinyl-[cysteine desulfurase] + A + AMP + 2 H(+)</text>
        <dbReference type="Rhea" id="RHEA:43340"/>
        <dbReference type="Rhea" id="RHEA-COMP:12157"/>
        <dbReference type="Rhea" id="RHEA-COMP:12158"/>
        <dbReference type="Rhea" id="RHEA-COMP:12910"/>
        <dbReference type="Rhea" id="RHEA-COMP:19908"/>
        <dbReference type="ChEBI" id="CHEBI:13193"/>
        <dbReference type="ChEBI" id="CHEBI:15378"/>
        <dbReference type="ChEBI" id="CHEBI:17499"/>
        <dbReference type="ChEBI" id="CHEBI:29950"/>
        <dbReference type="ChEBI" id="CHEBI:61963"/>
        <dbReference type="ChEBI" id="CHEBI:90618"/>
        <dbReference type="ChEBI" id="CHEBI:232372"/>
        <dbReference type="ChEBI" id="CHEBI:456215"/>
    </reaction>
</comment>
<comment type="pathway">
    <text evidence="1">Cofactor biosynthesis; thiamine diphosphate biosynthesis.</text>
</comment>
<comment type="subcellular location">
    <subcellularLocation>
        <location evidence="1">Cytoplasm</location>
    </subcellularLocation>
</comment>
<comment type="similarity">
    <text evidence="1">Belongs to the ThiI family.</text>
</comment>
<sequence>MKFIIKLFPEITIKSQSVRLRFIKILTSNIRNILKHCDESVAVVRHWDHIEVRAGDEQHRPLVADALTLIPGIHHILAVEERPWQDMHDIYLQTLVMYRDRLVGKSFCVRVKRRGTHDFTSQDVERYVGGGLNQNVDNTRVKLTHPDETVLLEIDNDRLLLITERLEGLGGFPIGTQEDVLSLISGGFDSGVSSYMLMRRGCRVNYCFFNLGGAAHEIGVRQVAHHLWRRFGQSHKVRFVSLDFAPVVNEILAKVEDGQMGIVLKRMMVRAASAIAERYGIQALVTGEALGQVSSQTLTNLRLIDNASDTLILRPLISHDKEHIITLAHQIGTEEYAKTMPEYCGVISKSPTVRAVKSRIEQEEGQFDFAVLETAVAQAQVVDIRELVAEEGNAPVAEVETTAELGSGDVVLDIRSQDEQEGCPLTLANVAVQTLPFYKLGSHFGELDQSKLYLLYCDRGVMSRLQALYLREQGFQNVKVYRP</sequence>
<keyword id="KW-0067">ATP-binding</keyword>
<keyword id="KW-0963">Cytoplasm</keyword>
<keyword id="KW-1015">Disulfide bond</keyword>
<keyword id="KW-0547">Nucleotide-binding</keyword>
<keyword id="KW-0676">Redox-active center</keyword>
<keyword id="KW-0694">RNA-binding</keyword>
<keyword id="KW-0784">Thiamine biosynthesis</keyword>
<keyword id="KW-0808">Transferase</keyword>
<keyword id="KW-0820">tRNA-binding</keyword>
<feature type="chain" id="PRO_1000074281" description="tRNA sulfurtransferase">
    <location>
        <begin position="1"/>
        <end position="483"/>
    </location>
</feature>
<feature type="domain" description="THUMP" evidence="1">
    <location>
        <begin position="61"/>
        <end position="165"/>
    </location>
</feature>
<feature type="domain" description="Rhodanese" evidence="1">
    <location>
        <begin position="405"/>
        <end position="483"/>
    </location>
</feature>
<feature type="active site" description="Cysteine persulfide intermediate" evidence="1">
    <location>
        <position position="457"/>
    </location>
</feature>
<feature type="binding site" evidence="1">
    <location>
        <begin position="183"/>
        <end position="184"/>
    </location>
    <ligand>
        <name>ATP</name>
        <dbReference type="ChEBI" id="CHEBI:30616"/>
    </ligand>
</feature>
<feature type="binding site" evidence="1">
    <location>
        <position position="265"/>
    </location>
    <ligand>
        <name>ATP</name>
        <dbReference type="ChEBI" id="CHEBI:30616"/>
    </ligand>
</feature>
<feature type="binding site" evidence="1">
    <location>
        <position position="287"/>
    </location>
    <ligand>
        <name>ATP</name>
        <dbReference type="ChEBI" id="CHEBI:30616"/>
    </ligand>
</feature>
<feature type="binding site" evidence="1">
    <location>
        <position position="296"/>
    </location>
    <ligand>
        <name>ATP</name>
        <dbReference type="ChEBI" id="CHEBI:30616"/>
    </ligand>
</feature>
<feature type="disulfide bond" description="Redox-active" evidence="1">
    <location>
        <begin position="344"/>
        <end position="457"/>
    </location>
</feature>
<proteinExistence type="inferred from homology"/>
<gene>
    <name evidence="1" type="primary">thiI</name>
    <name type="ordered locus">SG0659</name>
</gene>